<keyword id="KW-0378">Hydrolase</keyword>
<keyword id="KW-0546">Nucleotide metabolism</keyword>
<keyword id="KW-0547">Nucleotide-binding</keyword>
<feature type="chain" id="PRO_1000009727" description="dCTP deaminase">
    <location>
        <begin position="1"/>
        <end position="188"/>
    </location>
</feature>
<feature type="active site" description="Proton donor/acceptor" evidence="1">
    <location>
        <position position="137"/>
    </location>
</feature>
<feature type="binding site" evidence="1">
    <location>
        <begin position="111"/>
        <end position="116"/>
    </location>
    <ligand>
        <name>dCTP</name>
        <dbReference type="ChEBI" id="CHEBI:61481"/>
    </ligand>
</feature>
<feature type="binding site" evidence="1">
    <location>
        <begin position="135"/>
        <end position="137"/>
    </location>
    <ligand>
        <name>dCTP</name>
        <dbReference type="ChEBI" id="CHEBI:61481"/>
    </ligand>
</feature>
<feature type="binding site" evidence="1">
    <location>
        <position position="156"/>
    </location>
    <ligand>
        <name>dCTP</name>
        <dbReference type="ChEBI" id="CHEBI:61481"/>
    </ligand>
</feature>
<feature type="binding site" evidence="1">
    <location>
        <position position="170"/>
    </location>
    <ligand>
        <name>dCTP</name>
        <dbReference type="ChEBI" id="CHEBI:61481"/>
    </ligand>
</feature>
<feature type="binding site" evidence="1">
    <location>
        <position position="180"/>
    </location>
    <ligand>
        <name>dCTP</name>
        <dbReference type="ChEBI" id="CHEBI:61481"/>
    </ligand>
</feature>
<evidence type="ECO:0000255" key="1">
    <source>
        <dbReference type="HAMAP-Rule" id="MF_00146"/>
    </source>
</evidence>
<accession>Q0BLI9</accession>
<gene>
    <name evidence="1" type="primary">dcd</name>
    <name type="ordered locus">FTH_1183</name>
</gene>
<dbReference type="EC" id="3.5.4.13" evidence="1"/>
<dbReference type="EMBL" id="CP000437">
    <property type="protein sequence ID" value="ABI83045.1"/>
    <property type="molecule type" value="Genomic_DNA"/>
</dbReference>
<dbReference type="RefSeq" id="WP_003016296.1">
    <property type="nucleotide sequence ID" value="NC_017463.1"/>
</dbReference>
<dbReference type="SMR" id="Q0BLI9"/>
<dbReference type="GeneID" id="75265387"/>
<dbReference type="KEGG" id="fth:FTH_1183"/>
<dbReference type="UniPathway" id="UPA00610">
    <property type="reaction ID" value="UER00665"/>
</dbReference>
<dbReference type="GO" id="GO:0008829">
    <property type="term" value="F:dCTP deaminase activity"/>
    <property type="evidence" value="ECO:0007669"/>
    <property type="project" value="UniProtKB-UniRule"/>
</dbReference>
<dbReference type="GO" id="GO:0000166">
    <property type="term" value="F:nucleotide binding"/>
    <property type="evidence" value="ECO:0007669"/>
    <property type="project" value="UniProtKB-KW"/>
</dbReference>
<dbReference type="GO" id="GO:0006226">
    <property type="term" value="P:dUMP biosynthetic process"/>
    <property type="evidence" value="ECO:0007669"/>
    <property type="project" value="UniProtKB-UniPathway"/>
</dbReference>
<dbReference type="GO" id="GO:0006229">
    <property type="term" value="P:dUTP biosynthetic process"/>
    <property type="evidence" value="ECO:0007669"/>
    <property type="project" value="UniProtKB-UniRule"/>
</dbReference>
<dbReference type="GO" id="GO:0015949">
    <property type="term" value="P:nucleobase-containing small molecule interconversion"/>
    <property type="evidence" value="ECO:0007669"/>
    <property type="project" value="TreeGrafter"/>
</dbReference>
<dbReference type="CDD" id="cd07557">
    <property type="entry name" value="trimeric_dUTPase"/>
    <property type="match status" value="1"/>
</dbReference>
<dbReference type="FunFam" id="2.70.40.10:FF:000001">
    <property type="entry name" value="dCTP deaminase"/>
    <property type="match status" value="1"/>
</dbReference>
<dbReference type="Gene3D" id="2.70.40.10">
    <property type="match status" value="1"/>
</dbReference>
<dbReference type="HAMAP" id="MF_00146">
    <property type="entry name" value="dCTP_deaminase"/>
    <property type="match status" value="1"/>
</dbReference>
<dbReference type="InterPro" id="IPR011962">
    <property type="entry name" value="dCTP_deaminase"/>
</dbReference>
<dbReference type="InterPro" id="IPR036157">
    <property type="entry name" value="dUTPase-like_sf"/>
</dbReference>
<dbReference type="InterPro" id="IPR033704">
    <property type="entry name" value="dUTPase_trimeric"/>
</dbReference>
<dbReference type="NCBIfam" id="TIGR02274">
    <property type="entry name" value="dCTP_deam"/>
    <property type="match status" value="1"/>
</dbReference>
<dbReference type="PANTHER" id="PTHR42680">
    <property type="entry name" value="DCTP DEAMINASE"/>
    <property type="match status" value="1"/>
</dbReference>
<dbReference type="PANTHER" id="PTHR42680:SF3">
    <property type="entry name" value="DCTP DEAMINASE"/>
    <property type="match status" value="1"/>
</dbReference>
<dbReference type="Pfam" id="PF22769">
    <property type="entry name" value="DCD"/>
    <property type="match status" value="1"/>
</dbReference>
<dbReference type="SUPFAM" id="SSF51283">
    <property type="entry name" value="dUTPase-like"/>
    <property type="match status" value="1"/>
</dbReference>
<reference key="1">
    <citation type="journal article" date="2006" name="J. Bacteriol.">
        <title>Chromosome rearrangement and diversification of Francisella tularensis revealed by the type B (OSU18) genome sequence.</title>
        <authorList>
            <person name="Petrosino J.F."/>
            <person name="Xiang Q."/>
            <person name="Karpathy S.E."/>
            <person name="Jiang H."/>
            <person name="Yerrapragada S."/>
            <person name="Liu Y."/>
            <person name="Gioia J."/>
            <person name="Hemphill L."/>
            <person name="Gonzalez A."/>
            <person name="Raghavan T.M."/>
            <person name="Uzman A."/>
            <person name="Fox G.E."/>
            <person name="Highlander S."/>
            <person name="Reichard M."/>
            <person name="Morton R.J."/>
            <person name="Clinkenbeard K.D."/>
            <person name="Weinstock G.M."/>
        </authorList>
    </citation>
    <scope>NUCLEOTIDE SEQUENCE [LARGE SCALE GENOMIC DNA]</scope>
    <source>
        <strain>OSU18</strain>
    </source>
</reference>
<sequence>MTIKSDKWIKKMSQEHNMIEPFEAGQVKVINNQKIVSYGTSSYGYDVRCADEFKIFTNINSSIVDPKNFNDKNFVDFKGDVCIIPPNSFALARTVEKFKIPRDTLVVCLGKSTYARCGIIVNVTPLEPEWEGYVTLEFSNTTPLPAKIYANEGVAQMLFFQSDEECETSYADKGGKYQGQVGVTLPKC</sequence>
<comment type="function">
    <text evidence="1">Catalyzes the deamination of dCTP to dUTP.</text>
</comment>
<comment type="catalytic activity">
    <reaction evidence="1">
        <text>dCTP + H2O + H(+) = dUTP + NH4(+)</text>
        <dbReference type="Rhea" id="RHEA:22680"/>
        <dbReference type="ChEBI" id="CHEBI:15377"/>
        <dbReference type="ChEBI" id="CHEBI:15378"/>
        <dbReference type="ChEBI" id="CHEBI:28938"/>
        <dbReference type="ChEBI" id="CHEBI:61481"/>
        <dbReference type="ChEBI" id="CHEBI:61555"/>
        <dbReference type="EC" id="3.5.4.13"/>
    </reaction>
</comment>
<comment type="pathway">
    <text evidence="1">Pyrimidine metabolism; dUMP biosynthesis; dUMP from dCTP (dUTP route): step 1/2.</text>
</comment>
<comment type="subunit">
    <text evidence="1">Homotrimer.</text>
</comment>
<comment type="similarity">
    <text evidence="1">Belongs to the dCTP deaminase family.</text>
</comment>
<protein>
    <recommendedName>
        <fullName evidence="1">dCTP deaminase</fullName>
        <ecNumber evidence="1">3.5.4.13</ecNumber>
    </recommendedName>
    <alternativeName>
        <fullName evidence="1">Deoxycytidine triphosphate deaminase</fullName>
    </alternativeName>
</protein>
<organism>
    <name type="scientific">Francisella tularensis subsp. holarctica (strain OSU18)</name>
    <dbReference type="NCBI Taxonomy" id="393011"/>
    <lineage>
        <taxon>Bacteria</taxon>
        <taxon>Pseudomonadati</taxon>
        <taxon>Pseudomonadota</taxon>
        <taxon>Gammaproteobacteria</taxon>
        <taxon>Thiotrichales</taxon>
        <taxon>Francisellaceae</taxon>
        <taxon>Francisella</taxon>
    </lineage>
</organism>
<proteinExistence type="inferred from homology"/>
<name>DCD_FRATO</name>